<sequence>MVWDATNIFLFAANILTVLYILYNDAVIPLWKGKTVLSVKLRSRGRWDGYIFVGIIVLLFVSNTFFREGPFSTSVLLGIMGVLFIYICFFRSSKAVFKESGLFYALLFFPYAKIERMNLSEDGVLVIETNRQRLMLFARSEKDLEKMLAVFTTYS</sequence>
<proteinExistence type="inferred from homology"/>
<feature type="chain" id="PRO_0000218116" description="UPF0266 membrane protein LMOf2365_0797">
    <location>
        <begin position="1"/>
        <end position="155"/>
    </location>
</feature>
<feature type="transmembrane region" description="Helical" evidence="1">
    <location>
        <begin position="8"/>
        <end position="28"/>
    </location>
</feature>
<feature type="transmembrane region" description="Helical" evidence="1">
    <location>
        <begin position="46"/>
        <end position="66"/>
    </location>
</feature>
<feature type="transmembrane region" description="Helical" evidence="1">
    <location>
        <begin position="70"/>
        <end position="90"/>
    </location>
</feature>
<keyword id="KW-1003">Cell membrane</keyword>
<keyword id="KW-0472">Membrane</keyword>
<keyword id="KW-0812">Transmembrane</keyword>
<keyword id="KW-1133">Transmembrane helix</keyword>
<organism>
    <name type="scientific">Listeria monocytogenes serotype 4b (strain F2365)</name>
    <dbReference type="NCBI Taxonomy" id="265669"/>
    <lineage>
        <taxon>Bacteria</taxon>
        <taxon>Bacillati</taxon>
        <taxon>Bacillota</taxon>
        <taxon>Bacilli</taxon>
        <taxon>Bacillales</taxon>
        <taxon>Listeriaceae</taxon>
        <taxon>Listeria</taxon>
    </lineage>
</organism>
<name>Y797_LISMF</name>
<reference key="1">
    <citation type="journal article" date="2004" name="Nucleic Acids Res.">
        <title>Whole genome comparisons of serotype 4b and 1/2a strains of the food-borne pathogen Listeria monocytogenes reveal new insights into the core genome components of this species.</title>
        <authorList>
            <person name="Nelson K.E."/>
            <person name="Fouts D.E."/>
            <person name="Mongodin E.F."/>
            <person name="Ravel J."/>
            <person name="DeBoy R.T."/>
            <person name="Kolonay J.F."/>
            <person name="Rasko D.A."/>
            <person name="Angiuoli S.V."/>
            <person name="Gill S.R."/>
            <person name="Paulsen I.T."/>
            <person name="Peterson J.D."/>
            <person name="White O."/>
            <person name="Nelson W.C."/>
            <person name="Nierman W.C."/>
            <person name="Beanan M.J."/>
            <person name="Brinkac L.M."/>
            <person name="Daugherty S.C."/>
            <person name="Dodson R.J."/>
            <person name="Durkin A.S."/>
            <person name="Madupu R."/>
            <person name="Haft D.H."/>
            <person name="Selengut J."/>
            <person name="Van Aken S.E."/>
            <person name="Khouri H.M."/>
            <person name="Fedorova N."/>
            <person name="Forberger H.A."/>
            <person name="Tran B."/>
            <person name="Kathariou S."/>
            <person name="Wonderling L.D."/>
            <person name="Uhlich G.A."/>
            <person name="Bayles D.O."/>
            <person name="Luchansky J.B."/>
            <person name="Fraser C.M."/>
        </authorList>
    </citation>
    <scope>NUCLEOTIDE SEQUENCE [LARGE SCALE GENOMIC DNA]</scope>
    <source>
        <strain>F2365</strain>
    </source>
</reference>
<evidence type="ECO:0000255" key="1">
    <source>
        <dbReference type="HAMAP-Rule" id="MF_01071"/>
    </source>
</evidence>
<accession>Q722D6</accession>
<gene>
    <name type="ordered locus">LMOf2365_0797</name>
</gene>
<comment type="subcellular location">
    <subcellularLocation>
        <location evidence="1">Cell membrane</location>
        <topology evidence="1">Multi-pass membrane protein</topology>
    </subcellularLocation>
</comment>
<comment type="similarity">
    <text evidence="1">Belongs to the UPF0266 family.</text>
</comment>
<dbReference type="EMBL" id="AE017262">
    <property type="protein sequence ID" value="AAT03578.1"/>
    <property type="molecule type" value="Genomic_DNA"/>
</dbReference>
<dbReference type="RefSeq" id="WP_003721896.1">
    <property type="nucleotide sequence ID" value="NC_002973.6"/>
</dbReference>
<dbReference type="KEGG" id="lmf:LMOf2365_0797"/>
<dbReference type="HOGENOM" id="CLU_133645_0_0_9"/>
<dbReference type="GO" id="GO:0005886">
    <property type="term" value="C:plasma membrane"/>
    <property type="evidence" value="ECO:0007669"/>
    <property type="project" value="UniProtKB-SubCell"/>
</dbReference>
<dbReference type="HAMAP" id="MF_01071">
    <property type="entry name" value="UPF0266"/>
    <property type="match status" value="1"/>
</dbReference>
<dbReference type="InterPro" id="IPR009328">
    <property type="entry name" value="DUF986"/>
</dbReference>
<dbReference type="NCBIfam" id="NF002791">
    <property type="entry name" value="PRK02913.1"/>
    <property type="match status" value="1"/>
</dbReference>
<dbReference type="Pfam" id="PF06173">
    <property type="entry name" value="DUF986"/>
    <property type="match status" value="1"/>
</dbReference>
<dbReference type="PIRSF" id="PIRSF020687">
    <property type="entry name" value="UCP020687"/>
    <property type="match status" value="1"/>
</dbReference>
<protein>
    <recommendedName>
        <fullName evidence="1">UPF0266 membrane protein LMOf2365_0797</fullName>
    </recommendedName>
</protein>